<keyword id="KW-0878">Amphibian defense peptide</keyword>
<keyword id="KW-0903">Direct protein sequencing</keyword>
<keyword id="KW-1213">G-protein coupled receptor impairing toxin</keyword>
<keyword id="KW-0964">Secreted</keyword>
<keyword id="KW-0732">Signal</keyword>
<keyword id="KW-0765">Sulfation</keyword>
<keyword id="KW-0800">Toxin</keyword>
<keyword id="KW-0838">Vasoactive</keyword>
<keyword id="KW-0840">Vasodilator</keyword>
<gene>
    <name evidence="7" type="primary">pb-H1</name>
</gene>
<organism>
    <name type="scientific">Pithecopus azureus</name>
    <name type="common">Orange-legged monkey tree frog</name>
    <name type="synonym">Phyllomedusa azurea</name>
    <dbReference type="NCBI Taxonomy" id="2034991"/>
    <lineage>
        <taxon>Eukaryota</taxon>
        <taxon>Metazoa</taxon>
        <taxon>Chordata</taxon>
        <taxon>Craniata</taxon>
        <taxon>Vertebrata</taxon>
        <taxon>Euteleostomi</taxon>
        <taxon>Amphibia</taxon>
        <taxon>Batrachia</taxon>
        <taxon>Anura</taxon>
        <taxon>Neobatrachia</taxon>
        <taxon>Hyloidea</taxon>
        <taxon>Hylidae</taxon>
        <taxon>Phyllomedusinae</taxon>
        <taxon>Pithecopus</taxon>
    </lineage>
</organism>
<comment type="function">
    <text evidence="1">May produce in vitro relaxation of rat arterial smooth muscle and constriction of intestinal smooth muscle (By similarity). May target bradykinin receptors (BDKRB).</text>
</comment>
<comment type="subcellular location">
    <subcellularLocation>
        <location evidence="4">Secreted</location>
    </subcellularLocation>
</comment>
<comment type="tissue specificity">
    <text evidence="4">Expressed by the skin glands.</text>
</comment>
<comment type="mass spectrometry">
    <molecule>Glu,Pro-[Val1,Thr6]-bradykinyl-Leu,Thr</molecule>
</comment>
<comment type="mass spectrometry">
    <molecule>[Val1,Thr6]-bradykinyl-Leu,Thr</molecule>
</comment>
<comment type="mass spectrometry">
    <molecule>[Val1,Thr6]-bradykinin</molecule>
</comment>
<comment type="similarity">
    <text evidence="6">Belongs to the frog skin active peptide (FSAP) family. Bradykinin-related peptide subfamily.</text>
</comment>
<proteinExistence type="evidence at protein level"/>
<feature type="signal peptide" evidence="2">
    <location>
        <begin position="1"/>
        <end position="22"/>
    </location>
</feature>
<feature type="propeptide" id="PRO_0000250592" evidence="4">
    <location>
        <begin position="23"/>
        <end position="48"/>
    </location>
</feature>
<feature type="peptide" id="PRO_0000343883" description="Glu,Pro-[Val1,Thr6]-bradykinyl-Leu,Thr">
    <location>
        <begin position="49"/>
        <end position="61"/>
    </location>
</feature>
<feature type="peptide" id="PRO_0000250593" description="[Val1,Thr6]-bradykinyl-Leu,Thr">
    <location>
        <begin position="51"/>
        <end position="61"/>
    </location>
</feature>
<feature type="peptide" id="PRO_0000343884" description="[Val1,Thr6]-bradykinin" evidence="4">
    <location>
        <begin position="51"/>
        <end position="59"/>
    </location>
</feature>
<feature type="region of interest" description="Disordered" evidence="3">
    <location>
        <begin position="24"/>
        <end position="61"/>
    </location>
</feature>
<feature type="compositionally biased region" description="Acidic residues" evidence="3">
    <location>
        <begin position="30"/>
        <end position="42"/>
    </location>
</feature>
<reference evidence="6 7" key="1">
    <citation type="journal article" date="2006" name="Rapid Commun. Mass Spectrom.">
        <title>Bradykinin-related peptides from Phyllomedusa hypochondrialis azurea: Mass spectrometric structural characterisation and cloning of precursor cDNAs.</title>
        <authorList>
            <person name="Thompson A.H."/>
            <person name="Bjourson A.J."/>
            <person name="Shaw C."/>
            <person name="McClean S."/>
        </authorList>
    </citation>
    <scope>NUCLEOTIDE SEQUENCE [MRNA]</scope>
    <scope>PROTEIN SEQUENCE OF 49-61</scope>
    <scope>SUBCELLULAR LOCATION</scope>
    <scope>TISSUE SPECIFICITY</scope>
    <scope>MASS SPECTROMETRY</scope>
    <source>
        <tissue>Skin</tissue>
        <tissue evidence="4">Skin secretion</tissue>
    </source>
</reference>
<name>BRK1_PITAZ</name>
<sequence>MSFLKKSLFLVLFLGLVSFSICEEEKRETEEEENKDETEEQSEEKKRFEPVPPGFTPFRLT</sequence>
<accession>Q0VTU0</accession>
<accession>P84933</accession>
<protein>
    <recommendedName>
        <fullName>Probradykinin-1</fullName>
    </recommendedName>
    <component>
        <recommendedName>
            <fullName>Glu,Pro-[Val1,Thr6]-bradykinyl-Leu,Thr</fullName>
        </recommendedName>
    </component>
    <component>
        <recommendedName>
            <fullName>[Val1,Thr6]-bradykinyl-Leu,Thr</fullName>
        </recommendedName>
        <alternativeName>
            <fullName evidence="5">[Val1,Thr6]-bradykinin-Leu,Thr</fullName>
        </alternativeName>
    </component>
    <component>
        <recommendedName>
            <fullName evidence="5">[Val1,Thr6]-bradykinin</fullName>
        </recommendedName>
    </component>
</protein>
<evidence type="ECO:0000250" key="1"/>
<evidence type="ECO:0000255" key="2"/>
<evidence type="ECO:0000256" key="3">
    <source>
        <dbReference type="SAM" id="MobiDB-lite"/>
    </source>
</evidence>
<evidence type="ECO:0000269" key="4">
    <source>
    </source>
</evidence>
<evidence type="ECO:0000303" key="5">
    <source>
    </source>
</evidence>
<evidence type="ECO:0000305" key="6"/>
<evidence type="ECO:0000312" key="7">
    <source>
        <dbReference type="EMBL" id="CAK55548.1"/>
    </source>
</evidence>
<dbReference type="EMBL" id="AM283481">
    <property type="protein sequence ID" value="CAK55548.1"/>
    <property type="molecule type" value="mRNA"/>
</dbReference>
<dbReference type="GO" id="GO:0005576">
    <property type="term" value="C:extracellular region"/>
    <property type="evidence" value="ECO:0007669"/>
    <property type="project" value="UniProtKB-SubCell"/>
</dbReference>
<dbReference type="GO" id="GO:0090729">
    <property type="term" value="F:toxin activity"/>
    <property type="evidence" value="ECO:0007669"/>
    <property type="project" value="UniProtKB-KW"/>
</dbReference>
<dbReference type="GO" id="GO:0006952">
    <property type="term" value="P:defense response"/>
    <property type="evidence" value="ECO:0007669"/>
    <property type="project" value="UniProtKB-KW"/>
</dbReference>
<dbReference type="GO" id="GO:0042311">
    <property type="term" value="P:vasodilation"/>
    <property type="evidence" value="ECO:0007669"/>
    <property type="project" value="UniProtKB-KW"/>
</dbReference>
<dbReference type="InterPro" id="IPR004275">
    <property type="entry name" value="Frog_antimicrobial_propeptide"/>
</dbReference>
<dbReference type="Pfam" id="PF03032">
    <property type="entry name" value="FSAP_sig_propep"/>
    <property type="match status" value="1"/>
</dbReference>